<reference key="1">
    <citation type="journal article" date="1998" name="Science">
        <title>Complete genome sequence of Treponema pallidum, the syphilis spirochete.</title>
        <authorList>
            <person name="Fraser C.M."/>
            <person name="Norris S.J."/>
            <person name="Weinstock G.M."/>
            <person name="White O."/>
            <person name="Sutton G.G."/>
            <person name="Dodson R.J."/>
            <person name="Gwinn M.L."/>
            <person name="Hickey E.K."/>
            <person name="Clayton R.A."/>
            <person name="Ketchum K.A."/>
            <person name="Sodergren E."/>
            <person name="Hardham J.M."/>
            <person name="McLeod M.P."/>
            <person name="Salzberg S.L."/>
            <person name="Peterson J.D."/>
            <person name="Khalak H.G."/>
            <person name="Richardson D.L."/>
            <person name="Howell J.K."/>
            <person name="Chidambaram M."/>
            <person name="Utterback T.R."/>
            <person name="McDonald L.A."/>
            <person name="Artiach P."/>
            <person name="Bowman C."/>
            <person name="Cotton M.D."/>
            <person name="Fujii C."/>
            <person name="Garland S.A."/>
            <person name="Hatch B."/>
            <person name="Horst K."/>
            <person name="Roberts K.M."/>
            <person name="Sandusky M."/>
            <person name="Weidman J.F."/>
            <person name="Smith H.O."/>
            <person name="Venter J.C."/>
        </authorList>
    </citation>
    <scope>NUCLEOTIDE SEQUENCE [LARGE SCALE GENOMIC DNA]</scope>
    <source>
        <strain>Nichols</strain>
    </source>
</reference>
<comment type="function">
    <text evidence="1">Required for rescue of stalled ribosomes mediated by trans-translation. Binds to transfer-messenger RNA (tmRNA), required for stable association of tmRNA with ribosomes. tmRNA and SmpB together mimic tRNA shape, replacing the anticodon stem-loop with SmpB. tmRNA is encoded by the ssrA gene; the 2 termini fold to resemble tRNA(Ala) and it encodes a 'tag peptide', a short internal open reading frame. During trans-translation Ala-aminoacylated tmRNA acts like a tRNA, entering the A-site of stalled ribosomes, displacing the stalled mRNA. The ribosome then switches to translate the ORF on the tmRNA; the nascent peptide is terminated with the 'tag peptide' encoded by the tmRNA and targeted for degradation. The ribosome is freed to recommence translation, which seems to be the essential function of trans-translation.</text>
</comment>
<comment type="subcellular location">
    <subcellularLocation>
        <location evidence="1">Cytoplasm</location>
    </subcellularLocation>
    <text evidence="1">The tmRNA-SmpB complex associates with stalled 70S ribosomes.</text>
</comment>
<comment type="similarity">
    <text evidence="1">Belongs to the SmpB family.</text>
</comment>
<comment type="sequence caution" evidence="2">
    <conflict type="erroneous initiation">
        <sequence resource="EMBL-CDS" id="AAC65169"/>
    </conflict>
    <text>Extended N-terminus.</text>
</comment>
<sequence>MRGTGTHLIAKNRKAFFNYHVEDRLECGIALEGTEVKSVRAGHLSFPDAFAEMRGGELWLKNVHIAEYVHACSFAPNPDRMRKLLAHRDQIARLKRKVEEKGYTLVPLEFYLKAGRVKVALGICKGKKLFDKRAQIKARDNARELSRSLCERHH</sequence>
<organism>
    <name type="scientific">Treponema pallidum (strain Nichols)</name>
    <dbReference type="NCBI Taxonomy" id="243276"/>
    <lineage>
        <taxon>Bacteria</taxon>
        <taxon>Pseudomonadati</taxon>
        <taxon>Spirochaetota</taxon>
        <taxon>Spirochaetia</taxon>
        <taxon>Spirochaetales</taxon>
        <taxon>Treponemataceae</taxon>
        <taxon>Treponema</taxon>
    </lineage>
</organism>
<proteinExistence type="inferred from homology"/>
<dbReference type="EMBL" id="AE000520">
    <property type="protein sequence ID" value="AAC65169.1"/>
    <property type="status" value="ALT_INIT"/>
    <property type="molecule type" value="Genomic_DNA"/>
</dbReference>
<dbReference type="PIR" id="B71354">
    <property type="entry name" value="B71354"/>
</dbReference>
<dbReference type="RefSeq" id="WP_010881631.1">
    <property type="nucleotide sequence ID" value="NC_021490.2"/>
</dbReference>
<dbReference type="SMR" id="O83214"/>
<dbReference type="IntAct" id="O83214">
    <property type="interactions" value="1"/>
</dbReference>
<dbReference type="STRING" id="243276.TP_0184"/>
<dbReference type="EnsemblBacteria" id="AAC65169">
    <property type="protein sequence ID" value="AAC65169"/>
    <property type="gene ID" value="TP_0184"/>
</dbReference>
<dbReference type="GeneID" id="93875972"/>
<dbReference type="KEGG" id="tpa:TP_0184"/>
<dbReference type="KEGG" id="tpw:TPANIC_0184"/>
<dbReference type="eggNOG" id="COG0691">
    <property type="taxonomic scope" value="Bacteria"/>
</dbReference>
<dbReference type="HOGENOM" id="CLU_108953_0_0_12"/>
<dbReference type="OrthoDB" id="9805462at2"/>
<dbReference type="Proteomes" id="UP000000811">
    <property type="component" value="Chromosome"/>
</dbReference>
<dbReference type="GO" id="GO:0005829">
    <property type="term" value="C:cytosol"/>
    <property type="evidence" value="ECO:0007669"/>
    <property type="project" value="TreeGrafter"/>
</dbReference>
<dbReference type="GO" id="GO:0003723">
    <property type="term" value="F:RNA binding"/>
    <property type="evidence" value="ECO:0007669"/>
    <property type="project" value="UniProtKB-UniRule"/>
</dbReference>
<dbReference type="GO" id="GO:0070929">
    <property type="term" value="P:trans-translation"/>
    <property type="evidence" value="ECO:0007669"/>
    <property type="project" value="UniProtKB-UniRule"/>
</dbReference>
<dbReference type="CDD" id="cd09294">
    <property type="entry name" value="SmpB"/>
    <property type="match status" value="1"/>
</dbReference>
<dbReference type="Gene3D" id="2.40.280.10">
    <property type="match status" value="1"/>
</dbReference>
<dbReference type="HAMAP" id="MF_00023">
    <property type="entry name" value="SmpB"/>
    <property type="match status" value="1"/>
</dbReference>
<dbReference type="InterPro" id="IPR023620">
    <property type="entry name" value="SmpB"/>
</dbReference>
<dbReference type="InterPro" id="IPR000037">
    <property type="entry name" value="SsrA-bd_prot"/>
</dbReference>
<dbReference type="InterPro" id="IPR020081">
    <property type="entry name" value="SsrA-bd_prot_CS"/>
</dbReference>
<dbReference type="NCBIfam" id="NF003843">
    <property type="entry name" value="PRK05422.1"/>
    <property type="match status" value="1"/>
</dbReference>
<dbReference type="NCBIfam" id="TIGR00086">
    <property type="entry name" value="smpB"/>
    <property type="match status" value="1"/>
</dbReference>
<dbReference type="PANTHER" id="PTHR30308:SF2">
    <property type="entry name" value="SSRA-BINDING PROTEIN"/>
    <property type="match status" value="1"/>
</dbReference>
<dbReference type="PANTHER" id="PTHR30308">
    <property type="entry name" value="TMRNA-BINDING COMPONENT OF TRANS-TRANSLATION TAGGING COMPLEX"/>
    <property type="match status" value="1"/>
</dbReference>
<dbReference type="Pfam" id="PF01668">
    <property type="entry name" value="SmpB"/>
    <property type="match status" value="1"/>
</dbReference>
<dbReference type="SUPFAM" id="SSF74982">
    <property type="entry name" value="Small protein B (SmpB)"/>
    <property type="match status" value="1"/>
</dbReference>
<dbReference type="PROSITE" id="PS01317">
    <property type="entry name" value="SSRP"/>
    <property type="match status" value="1"/>
</dbReference>
<feature type="chain" id="PRO_0000103059" description="SsrA-binding protein">
    <location>
        <begin position="1"/>
        <end position="154"/>
    </location>
</feature>
<keyword id="KW-0963">Cytoplasm</keyword>
<keyword id="KW-1185">Reference proteome</keyword>
<keyword id="KW-0694">RNA-binding</keyword>
<protein>
    <recommendedName>
        <fullName evidence="1">SsrA-binding protein</fullName>
    </recommendedName>
    <alternativeName>
        <fullName evidence="1">Small protein B</fullName>
    </alternativeName>
</protein>
<name>SSRP_TREPA</name>
<gene>
    <name evidence="1" type="primary">smpB</name>
    <name type="ordered locus">TP_0184</name>
</gene>
<accession>O83214</accession>
<evidence type="ECO:0000255" key="1">
    <source>
        <dbReference type="HAMAP-Rule" id="MF_00023"/>
    </source>
</evidence>
<evidence type="ECO:0000305" key="2"/>